<evidence type="ECO:0000255" key="1">
    <source>
        <dbReference type="HAMAP-Rule" id="MF_01959"/>
    </source>
</evidence>
<reference key="1">
    <citation type="journal article" date="2009" name="Genome Biol.">
        <title>Genomic and genetic analyses of diversity and plant interactions of Pseudomonas fluorescens.</title>
        <authorList>
            <person name="Silby M.W."/>
            <person name="Cerdeno-Tarraga A.M."/>
            <person name="Vernikos G.S."/>
            <person name="Giddens S.R."/>
            <person name="Jackson R.W."/>
            <person name="Preston G.M."/>
            <person name="Zhang X.-X."/>
            <person name="Moon C.D."/>
            <person name="Gehrig S.M."/>
            <person name="Godfrey S.A.C."/>
            <person name="Knight C.G."/>
            <person name="Malone J.G."/>
            <person name="Robinson Z."/>
            <person name="Spiers A.J."/>
            <person name="Harris S."/>
            <person name="Challis G.L."/>
            <person name="Yaxley A.M."/>
            <person name="Harris D."/>
            <person name="Seeger K."/>
            <person name="Murphy L."/>
            <person name="Rutter S."/>
            <person name="Squares R."/>
            <person name="Quail M.A."/>
            <person name="Saunders E."/>
            <person name="Mavromatis K."/>
            <person name="Brettin T.S."/>
            <person name="Bentley S.D."/>
            <person name="Hothersall J."/>
            <person name="Stephens E."/>
            <person name="Thomas C.M."/>
            <person name="Parkhill J."/>
            <person name="Levy S.B."/>
            <person name="Rainey P.B."/>
            <person name="Thomson N.R."/>
        </authorList>
    </citation>
    <scope>NUCLEOTIDE SEQUENCE [LARGE SCALE GENOMIC DNA]</scope>
    <source>
        <strain>Pf0-1</strain>
    </source>
</reference>
<gene>
    <name evidence="1" type="primary">ccmE2</name>
    <name evidence="1" type="synonym">cycJ2</name>
    <name type="ordered locus">Pfl01_2957</name>
</gene>
<keyword id="KW-0997">Cell inner membrane</keyword>
<keyword id="KW-1003">Cell membrane</keyword>
<keyword id="KW-0201">Cytochrome c-type biogenesis</keyword>
<keyword id="KW-0349">Heme</keyword>
<keyword id="KW-0408">Iron</keyword>
<keyword id="KW-0472">Membrane</keyword>
<keyword id="KW-0479">Metal-binding</keyword>
<keyword id="KW-0735">Signal-anchor</keyword>
<keyword id="KW-0812">Transmembrane</keyword>
<keyword id="KW-1133">Transmembrane helix</keyword>
<dbReference type="EMBL" id="CP000094">
    <property type="protein sequence ID" value="ABA74698.1"/>
    <property type="molecule type" value="Genomic_DNA"/>
</dbReference>
<dbReference type="RefSeq" id="WP_011334359.1">
    <property type="nucleotide sequence ID" value="NC_007492.2"/>
</dbReference>
<dbReference type="SMR" id="Q3KC07"/>
<dbReference type="KEGG" id="pfo:Pfl01_2957"/>
<dbReference type="eggNOG" id="COG2332">
    <property type="taxonomic scope" value="Bacteria"/>
</dbReference>
<dbReference type="HOGENOM" id="CLU_079503_1_1_6"/>
<dbReference type="Proteomes" id="UP000002704">
    <property type="component" value="Chromosome"/>
</dbReference>
<dbReference type="GO" id="GO:0005886">
    <property type="term" value="C:plasma membrane"/>
    <property type="evidence" value="ECO:0007669"/>
    <property type="project" value="UniProtKB-SubCell"/>
</dbReference>
<dbReference type="GO" id="GO:0020037">
    <property type="term" value="F:heme binding"/>
    <property type="evidence" value="ECO:0007669"/>
    <property type="project" value="InterPro"/>
</dbReference>
<dbReference type="GO" id="GO:0046872">
    <property type="term" value="F:metal ion binding"/>
    <property type="evidence" value="ECO:0007669"/>
    <property type="project" value="UniProtKB-KW"/>
</dbReference>
<dbReference type="GO" id="GO:0017004">
    <property type="term" value="P:cytochrome complex assembly"/>
    <property type="evidence" value="ECO:0007669"/>
    <property type="project" value="UniProtKB-KW"/>
</dbReference>
<dbReference type="FunFam" id="2.40.50.140:FF:000104">
    <property type="entry name" value="Cytochrome c-type biogenesis protein CcmE"/>
    <property type="match status" value="1"/>
</dbReference>
<dbReference type="Gene3D" id="2.40.50.140">
    <property type="entry name" value="Nucleic acid-binding proteins"/>
    <property type="match status" value="1"/>
</dbReference>
<dbReference type="HAMAP" id="MF_01959">
    <property type="entry name" value="CcmE"/>
    <property type="match status" value="1"/>
</dbReference>
<dbReference type="InterPro" id="IPR004329">
    <property type="entry name" value="CcmE"/>
</dbReference>
<dbReference type="InterPro" id="IPR036127">
    <property type="entry name" value="CcmE-like_sf"/>
</dbReference>
<dbReference type="InterPro" id="IPR012340">
    <property type="entry name" value="NA-bd_OB-fold"/>
</dbReference>
<dbReference type="NCBIfam" id="NF009727">
    <property type="entry name" value="PRK13254.1-1"/>
    <property type="match status" value="1"/>
</dbReference>
<dbReference type="NCBIfam" id="NF009729">
    <property type="entry name" value="PRK13254.1-3"/>
    <property type="match status" value="1"/>
</dbReference>
<dbReference type="NCBIfam" id="NF009731">
    <property type="entry name" value="PRK13254.1-5"/>
    <property type="match status" value="1"/>
</dbReference>
<dbReference type="PANTHER" id="PTHR34128">
    <property type="entry name" value="CYTOCHROME C-TYPE BIOGENESIS PROTEIN CCME HOMOLOG, MITOCHONDRIAL"/>
    <property type="match status" value="1"/>
</dbReference>
<dbReference type="PANTHER" id="PTHR34128:SF2">
    <property type="entry name" value="CYTOCHROME C-TYPE BIOGENESIS PROTEIN CCME HOMOLOG, MITOCHONDRIAL"/>
    <property type="match status" value="1"/>
</dbReference>
<dbReference type="Pfam" id="PF03100">
    <property type="entry name" value="CcmE"/>
    <property type="match status" value="1"/>
</dbReference>
<dbReference type="SUPFAM" id="SSF82093">
    <property type="entry name" value="Heme chaperone CcmE"/>
    <property type="match status" value="1"/>
</dbReference>
<sequence length="151" mass="16041">MNPLRKKRLVIILAILVGVGAAVGLALSALQQNINLFYTPTQIANGEAPKDTRIRAGGMVEKGSLVRSGDSLDAKFNVTDFNKTVTITYRGILPDLFREGQGIVALGKLNADDVVVADEVLAKHDEKYMPPEVAKALKDSGQSAPAPGKEG</sequence>
<organism>
    <name type="scientific">Pseudomonas fluorescens (strain Pf0-1)</name>
    <dbReference type="NCBI Taxonomy" id="205922"/>
    <lineage>
        <taxon>Bacteria</taxon>
        <taxon>Pseudomonadati</taxon>
        <taxon>Pseudomonadota</taxon>
        <taxon>Gammaproteobacteria</taxon>
        <taxon>Pseudomonadales</taxon>
        <taxon>Pseudomonadaceae</taxon>
        <taxon>Pseudomonas</taxon>
    </lineage>
</organism>
<protein>
    <recommendedName>
        <fullName evidence="1">Cytochrome c-type biogenesis protein CcmE 2</fullName>
    </recommendedName>
    <alternativeName>
        <fullName evidence="1">Cytochrome c maturation protein E 2</fullName>
    </alternativeName>
    <alternativeName>
        <fullName evidence="1">Heme chaperone CcmE 2</fullName>
    </alternativeName>
</protein>
<proteinExistence type="inferred from homology"/>
<feature type="chain" id="PRO_0000238838" description="Cytochrome c-type biogenesis protein CcmE 2">
    <location>
        <begin position="1"/>
        <end position="151"/>
    </location>
</feature>
<feature type="topological domain" description="Cytoplasmic" evidence="1">
    <location>
        <begin position="1"/>
        <end position="8"/>
    </location>
</feature>
<feature type="transmembrane region" description="Helical; Signal-anchor for type II membrane protein" evidence="1">
    <location>
        <begin position="9"/>
        <end position="29"/>
    </location>
</feature>
<feature type="topological domain" description="Periplasmic" evidence="1">
    <location>
        <begin position="30"/>
        <end position="151"/>
    </location>
</feature>
<feature type="binding site" description="covalent" evidence="1">
    <location>
        <position position="124"/>
    </location>
    <ligand>
        <name>heme</name>
        <dbReference type="ChEBI" id="CHEBI:30413"/>
    </ligand>
</feature>
<feature type="binding site" description="axial binding residue" evidence="1">
    <location>
        <position position="128"/>
    </location>
    <ligand>
        <name>heme</name>
        <dbReference type="ChEBI" id="CHEBI:30413"/>
    </ligand>
    <ligandPart>
        <name>Fe</name>
        <dbReference type="ChEBI" id="CHEBI:18248"/>
    </ligandPart>
</feature>
<name>CCME2_PSEPF</name>
<accession>Q3KC07</accession>
<comment type="function">
    <text evidence="1">Heme chaperone required for the biogenesis of c-type cytochromes. Transiently binds heme delivered by CcmC and transfers the heme to apo-cytochromes in a process facilitated by CcmF and CcmH.</text>
</comment>
<comment type="subcellular location">
    <subcellularLocation>
        <location evidence="1">Cell inner membrane</location>
        <topology evidence="1">Single-pass type II membrane protein</topology>
        <orientation evidence="1">Periplasmic side</orientation>
    </subcellularLocation>
</comment>
<comment type="similarity">
    <text evidence="1">Belongs to the CcmE/CycJ family.</text>
</comment>